<sequence>MRCVPVFIILLLLIASAPGVDAQPKTKYNAPLTSLHDNAKGILQEHWNKRCCPRRLACCIIGRK</sequence>
<comment type="subcellular location">
    <subcellularLocation>
        <location evidence="1">Secreted</location>
    </subcellularLocation>
</comment>
<comment type="tissue specificity">
    <text>Expressed by the venom duct.</text>
</comment>
<comment type="domain">
    <text>The cysteine framework is V (CC-CC).</text>
</comment>
<comment type="PTM">
    <text evidence="5">Contains 2 disulfide bonds that can be either 'C1-C3, C2-C4' or 'C1-C4, C2-C3', since these disulfide connectivities have been observed for conotoxins with cysteine framework V (for examples, see AC P0DQQ7 and AC P81755).</text>
</comment>
<comment type="similarity">
    <text evidence="5">Belongs to the conotoxin T superfamily.</text>
</comment>
<organism>
    <name type="scientific">Conus caracteristicus</name>
    <name type="common">Characteristic cone</name>
    <dbReference type="NCBI Taxonomy" id="89440"/>
    <lineage>
        <taxon>Eukaryota</taxon>
        <taxon>Metazoa</taxon>
        <taxon>Spiralia</taxon>
        <taxon>Lophotrochozoa</taxon>
        <taxon>Mollusca</taxon>
        <taxon>Gastropoda</taxon>
        <taxon>Caenogastropoda</taxon>
        <taxon>Neogastropoda</taxon>
        <taxon>Conoidea</taxon>
        <taxon>Conidae</taxon>
        <taxon>Conus</taxon>
    </lineage>
</organism>
<dbReference type="EMBL" id="EU090174">
    <property type="protein sequence ID" value="ABW77582.1"/>
    <property type="molecule type" value="mRNA"/>
</dbReference>
<dbReference type="ConoServer" id="2819">
    <property type="toxin name" value="Ca5.3 precursor"/>
</dbReference>
<dbReference type="GO" id="GO:0005576">
    <property type="term" value="C:extracellular region"/>
    <property type="evidence" value="ECO:0007669"/>
    <property type="project" value="UniProtKB-SubCell"/>
</dbReference>
<dbReference type="GO" id="GO:0090729">
    <property type="term" value="F:toxin activity"/>
    <property type="evidence" value="ECO:0007669"/>
    <property type="project" value="UniProtKB-KW"/>
</dbReference>
<dbReference type="InterPro" id="IPR031565">
    <property type="entry name" value="T-conotoxin"/>
</dbReference>
<dbReference type="Pfam" id="PF16981">
    <property type="entry name" value="Chi-conotoxin"/>
    <property type="match status" value="1"/>
</dbReference>
<evidence type="ECO:0000250" key="1"/>
<evidence type="ECO:0000255" key="2"/>
<evidence type="ECO:0000303" key="3">
    <source>
    </source>
</evidence>
<evidence type="ECO:0000303" key="4">
    <source>
    </source>
</evidence>
<evidence type="ECO:0000305" key="5"/>
<protein>
    <recommendedName>
        <fullName evidence="3">Conotoxin Ca5.3</fullName>
    </recommendedName>
    <alternativeName>
        <fullName evidence="4">Ca-95</fullName>
    </alternativeName>
</protein>
<proteinExistence type="evidence at transcript level"/>
<feature type="signal peptide" evidence="2">
    <location>
        <begin position="1"/>
        <end position="22"/>
    </location>
</feature>
<feature type="propeptide" id="PRO_0000316909" evidence="1">
    <location>
        <begin position="23"/>
        <end position="48"/>
    </location>
</feature>
<feature type="peptide" id="PRO_0000316910" description="Conotoxin Ca5.3">
    <location>
        <begin position="51"/>
        <end position="61"/>
    </location>
</feature>
<feature type="modified residue" description="Isoleucine amide" evidence="1">
    <location>
        <position position="61"/>
    </location>
</feature>
<keyword id="KW-0027">Amidation</keyword>
<keyword id="KW-0165">Cleavage on pair of basic residues</keyword>
<keyword id="KW-1015">Disulfide bond</keyword>
<keyword id="KW-0964">Secreted</keyword>
<keyword id="KW-0732">Signal</keyword>
<keyword id="KW-0800">Toxin</keyword>
<name>CT53_CONCB</name>
<accession>P0C668</accession>
<accession>B4XT46</accession>
<reference key="1">
    <citation type="journal article" date="2007" name="Peptides">
        <title>Identification of six novel T-1 conotoxins from Conus pulicarius by molecular cloning.</title>
        <authorList>
            <person name="Peng C."/>
            <person name="Wu X."/>
            <person name="Han Y."/>
            <person name="Yuan D."/>
            <person name="Chi C."/>
            <person name="Wang C."/>
        </authorList>
    </citation>
    <scope>NUCLEOTIDE SEQUENCE [MRNA]</scope>
    <source>
        <tissue>Venom duct</tissue>
    </source>
</reference>
<reference key="2">
    <citation type="journal article" date="2019" name="Mar. Drugs">
        <title>High-throughput identification and analysis of novel conotoxins from three vermivorous cone snails by transcriptome sequencing.</title>
        <authorList>
            <person name="Yao G."/>
            <person name="Peng C."/>
            <person name="Zhu Y."/>
            <person name="Fan C."/>
            <person name="Jiang H."/>
            <person name="Chen J."/>
            <person name="Cao Y."/>
            <person name="Shi Q."/>
        </authorList>
    </citation>
    <scope>NUCLEOTIDE SEQUENCE [MRNA] OF 41-64</scope>
    <source>
        <tissue>Venom duct</tissue>
    </source>
</reference>